<keyword id="KW-0349">Heme</keyword>
<keyword id="KW-0408">Iron</keyword>
<keyword id="KW-0472">Membrane</keyword>
<keyword id="KW-0479">Metal-binding</keyword>
<keyword id="KW-0503">Monooxygenase</keyword>
<keyword id="KW-0560">Oxidoreductase</keyword>
<keyword id="KW-0812">Transmembrane</keyword>
<keyword id="KW-1133">Transmembrane helix</keyword>
<proteinExistence type="evidence at protein level"/>
<comment type="function">
    <text evidence="3">Monooxygenase involved in the biosynthesis of curare monoterpene indole alkaloids (MIAs), natural products such as strychnine, a neurotoxic compound used as a pesticide to control rodents, and its pharmacologically active derivatives, including brucine, used to regulate blood pressure (PubMed:35794473). Curare alkaloids act as animal glycine receptor antagonists (PubMed:35794473). Catalyzes the conversion of strychnine to 10-OH strychnine (PubMed:35794473).</text>
</comment>
<comment type="catalytic activity">
    <reaction evidence="3">
        <text>strychnine + reduced [NADPH--hemoprotein reductase] + O2 = 10-hydroxystrychnine + oxidized [NADPH--hemoprotein reductase] + H2O + H(+)</text>
        <dbReference type="Rhea" id="RHEA:80931"/>
        <dbReference type="Rhea" id="RHEA-COMP:11964"/>
        <dbReference type="Rhea" id="RHEA-COMP:11965"/>
        <dbReference type="ChEBI" id="CHEBI:15377"/>
        <dbReference type="ChEBI" id="CHEBI:15378"/>
        <dbReference type="ChEBI" id="CHEBI:15379"/>
        <dbReference type="ChEBI" id="CHEBI:57618"/>
        <dbReference type="ChEBI" id="CHEBI:58210"/>
        <dbReference type="ChEBI" id="CHEBI:90700"/>
        <dbReference type="ChEBI" id="CHEBI:231754"/>
        <dbReference type="EC" id="1.14.14.189"/>
    </reaction>
    <physiologicalReaction direction="left-to-right" evidence="3">
        <dbReference type="Rhea" id="RHEA:80932"/>
    </physiologicalReaction>
</comment>
<comment type="cofactor">
    <cofactor evidence="1">
        <name>heme</name>
        <dbReference type="ChEBI" id="CHEBI:30413"/>
    </cofactor>
</comment>
<comment type="pathway">
    <text evidence="3">Alkaloid biosynthesis.</text>
</comment>
<comment type="subcellular location">
    <subcellularLocation>
        <location evidence="2">Membrane</location>
        <topology evidence="2">Single-pass membrane protein</topology>
    </subcellularLocation>
</comment>
<comment type="similarity">
    <text evidence="5">Belongs to the cytochrome P450 family.</text>
</comment>
<dbReference type="EC" id="1.14.14.189" evidence="3"/>
<dbReference type="EMBL" id="OM304296">
    <property type="protein sequence ID" value="UQZ09627.1"/>
    <property type="molecule type" value="mRNA"/>
</dbReference>
<dbReference type="SMR" id="P0DO85"/>
<dbReference type="KEGG" id="ag:UQZ09627"/>
<dbReference type="GO" id="GO:0016020">
    <property type="term" value="C:membrane"/>
    <property type="evidence" value="ECO:0007669"/>
    <property type="project" value="UniProtKB-SubCell"/>
</dbReference>
<dbReference type="GO" id="GO:0020037">
    <property type="term" value="F:heme binding"/>
    <property type="evidence" value="ECO:0007669"/>
    <property type="project" value="InterPro"/>
</dbReference>
<dbReference type="GO" id="GO:0005506">
    <property type="term" value="F:iron ion binding"/>
    <property type="evidence" value="ECO:0007669"/>
    <property type="project" value="InterPro"/>
</dbReference>
<dbReference type="GO" id="GO:0004497">
    <property type="term" value="F:monooxygenase activity"/>
    <property type="evidence" value="ECO:0000314"/>
    <property type="project" value="UniProtKB"/>
</dbReference>
<dbReference type="GO" id="GO:0016705">
    <property type="term" value="F:oxidoreductase activity, acting on paired donors, with incorporation or reduction of molecular oxygen"/>
    <property type="evidence" value="ECO:0007669"/>
    <property type="project" value="InterPro"/>
</dbReference>
<dbReference type="GO" id="GO:0009821">
    <property type="term" value="P:alkaloid biosynthetic process"/>
    <property type="evidence" value="ECO:0000314"/>
    <property type="project" value="UniProtKB"/>
</dbReference>
<dbReference type="CDD" id="cd20654">
    <property type="entry name" value="CYP82"/>
    <property type="match status" value="1"/>
</dbReference>
<dbReference type="FunFam" id="1.10.630.10:FF:000026">
    <property type="entry name" value="Cytochrome P450 82C4"/>
    <property type="match status" value="1"/>
</dbReference>
<dbReference type="Gene3D" id="1.10.630.10">
    <property type="entry name" value="Cytochrome P450"/>
    <property type="match status" value="1"/>
</dbReference>
<dbReference type="InterPro" id="IPR001128">
    <property type="entry name" value="Cyt_P450"/>
</dbReference>
<dbReference type="InterPro" id="IPR017972">
    <property type="entry name" value="Cyt_P450_CS"/>
</dbReference>
<dbReference type="InterPro" id="IPR002401">
    <property type="entry name" value="Cyt_P450_E_grp-I"/>
</dbReference>
<dbReference type="InterPro" id="IPR036396">
    <property type="entry name" value="Cyt_P450_sf"/>
</dbReference>
<dbReference type="InterPro" id="IPR050651">
    <property type="entry name" value="Plant_Cytochrome_P450_Monoox"/>
</dbReference>
<dbReference type="PANTHER" id="PTHR47947:SF39">
    <property type="entry name" value="CYTOCHROME P450"/>
    <property type="match status" value="1"/>
</dbReference>
<dbReference type="PANTHER" id="PTHR47947">
    <property type="entry name" value="CYTOCHROME P450 82C3-RELATED"/>
    <property type="match status" value="1"/>
</dbReference>
<dbReference type="Pfam" id="PF00067">
    <property type="entry name" value="p450"/>
    <property type="match status" value="1"/>
</dbReference>
<dbReference type="PRINTS" id="PR00463">
    <property type="entry name" value="EP450I"/>
</dbReference>
<dbReference type="PRINTS" id="PR00385">
    <property type="entry name" value="P450"/>
</dbReference>
<dbReference type="SUPFAM" id="SSF48264">
    <property type="entry name" value="Cytochrome P450"/>
    <property type="match status" value="1"/>
</dbReference>
<dbReference type="PROSITE" id="PS00086">
    <property type="entry name" value="CYTOCHROME_P450"/>
    <property type="match status" value="1"/>
</dbReference>
<accession>P0DO85</accession>
<reference key="1">
    <citation type="journal article" date="2022" name="Nature">
        <title>Biosynthesis of strychnine.</title>
        <authorList>
            <person name="Hong B."/>
            <person name="Grzech D."/>
            <person name="Caputi L."/>
            <person name="Sonawane P."/>
            <person name="Lopez C.E.R."/>
            <person name="Kamileen M.O."/>
            <person name="Hernandez Lozada N.J."/>
            <person name="Grabe V."/>
            <person name="O'Connor S.E."/>
        </authorList>
    </citation>
    <scope>NUCLEOTIDE SEQUENCE [MRNA]</scope>
    <scope>FUNCTION</scope>
    <scope>CATALYTIC ACTIVITY</scope>
    <scope>PATHWAY</scope>
</reference>
<protein>
    <recommendedName>
        <fullName evidence="4">Strychnine-10-hydroxylase</fullName>
        <shortName evidence="4">Snv10H</shortName>
        <ecNumber evidence="3">1.14.14.189</ecNumber>
    </recommendedName>
    <alternativeName>
        <fullName evidence="4">CYP450 monooxygenase 10H</fullName>
    </alternativeName>
    <alternativeName>
        <fullName evidence="4">Cytochrome P450 10H</fullName>
    </alternativeName>
</protein>
<organism>
    <name type="scientific">Strychnos nux-vomica</name>
    <name type="common">Poison nut</name>
    <name type="synonym">Strychnine tree</name>
    <dbReference type="NCBI Taxonomy" id="28545"/>
    <lineage>
        <taxon>Eukaryota</taxon>
        <taxon>Viridiplantae</taxon>
        <taxon>Streptophyta</taxon>
        <taxon>Embryophyta</taxon>
        <taxon>Tracheophyta</taxon>
        <taxon>Spermatophyta</taxon>
        <taxon>Magnoliopsida</taxon>
        <taxon>eudicotyledons</taxon>
        <taxon>Gunneridae</taxon>
        <taxon>Pentapetalae</taxon>
        <taxon>asterids</taxon>
        <taxon>lamiids</taxon>
        <taxon>Gentianales</taxon>
        <taxon>Loganiaceae</taxon>
        <taxon>Strychnos</taxon>
    </lineage>
</organism>
<sequence length="524" mass="59312">MEFSLLYIHTAILGLISLFLILHFVFWRLKSAKGGSAKNSLPPEAGGAWPIIGHLHLLSGSKLLHITLGSLADKCGPAFIIRLGVRQALVVSDWELAKELFTANDVAISSRPKLLAFESMSYDFAMFGFSPYGAYWRELRKLISVELLSTRRLELLKHIRVSETEISVKELYNLWKDKKNGSGHVLVEMKQWFGDLNLNVILRMVAGKRYFGTIDAKDQEEARRCQKAMSGFFHFTGLFLVADGFPFLRWMDLGGYEKKIKASAKEMDLIAEEWLQEHRRKRESGDVASEQDFMDLMLSLLEDVDLPGYDPDTITKATCINLILGGADTNTVMLTWTLSLLMNHPHILRKAQEELDIQVGKERRVNESDIANLEYLHAIVKETLRLYPASRLGGPREFSEDCTLGGYHVTKGTSLILNLWKLQRDPRIWSNPSEFRPERFLTTHKDLDVKGRYFELIPFGAGRRSCPGTAFGLQMLPFVLANLLHAFDISTDEKTDMTESPGLTTSKATPLDVLISPRLSPNLY</sequence>
<feature type="chain" id="PRO_0000461116" description="Strychnine-10-hydroxylase">
    <location>
        <begin position="1"/>
        <end position="524"/>
    </location>
</feature>
<feature type="transmembrane region" description="Helical" evidence="2">
    <location>
        <begin position="6"/>
        <end position="26"/>
    </location>
</feature>
<feature type="binding site" description="axial binding residue" evidence="1">
    <location>
        <position position="466"/>
    </location>
    <ligand>
        <name>heme</name>
        <dbReference type="ChEBI" id="CHEBI:30413"/>
    </ligand>
    <ligandPart>
        <name>Fe</name>
        <dbReference type="ChEBI" id="CHEBI:18248"/>
    </ligandPart>
</feature>
<evidence type="ECO:0000250" key="1">
    <source>
        <dbReference type="UniProtKB" id="Q94IP1"/>
    </source>
</evidence>
<evidence type="ECO:0000255" key="2"/>
<evidence type="ECO:0000269" key="3">
    <source>
    </source>
</evidence>
<evidence type="ECO:0000303" key="4">
    <source>
    </source>
</evidence>
<evidence type="ECO:0000305" key="5"/>
<gene>
    <name evidence="4" type="primary">10H</name>
</gene>
<name>10H_STRNX</name>